<evidence type="ECO:0000250" key="1"/>
<evidence type="ECO:0000256" key="2">
    <source>
        <dbReference type="SAM" id="MobiDB-lite"/>
    </source>
</evidence>
<evidence type="ECO:0000269" key="3">
    <source>
    </source>
</evidence>
<evidence type="ECO:0000305" key="4"/>
<protein>
    <recommendedName>
        <fullName>Histone H4</fullName>
    </recommendedName>
</protein>
<keyword id="KW-0158">Chromosome</keyword>
<keyword id="KW-0903">Direct protein sequencing</keyword>
<keyword id="KW-0238">DNA-binding</keyword>
<keyword id="KW-0544">Nucleosome core</keyword>
<keyword id="KW-0539">Nucleus</keyword>
<feature type="initiator methionine" description="Removed" evidence="3">
    <location>
        <position position="1"/>
    </location>
</feature>
<feature type="chain" id="PRO_0000158317" description="Histone H4">
    <location>
        <begin position="2"/>
        <end position="107"/>
    </location>
</feature>
<feature type="DNA-binding region">
    <location>
        <begin position="17"/>
        <end position="21"/>
    </location>
</feature>
<feature type="region of interest" description="Disordered" evidence="2">
    <location>
        <begin position="1"/>
        <end position="23"/>
    </location>
</feature>
<feature type="compositionally biased region" description="Gly residues" evidence="2">
    <location>
        <begin position="1"/>
        <end position="16"/>
    </location>
</feature>
<feature type="sequence conflict" description="In Ref. 2; AA sequence." evidence="4" ref="2">
    <original>G</original>
    <variation>A</variation>
    <location>
        <position position="5"/>
    </location>
</feature>
<feature type="sequence conflict" description="In Ref. 2; AA sequence." evidence="4" ref="2">
    <location>
        <position position="15"/>
    </location>
</feature>
<proteinExistence type="evidence at protein level"/>
<name>H4_EUPCR</name>
<sequence>MPGRGKGGKGGKGYGKVGAKRHAKKALRETILGVTKPAIRRLARRGGVKRISSLVYEETRAVLKGFLESVIRDSVTYTEHAKRKTVTALDVVYALKRQGKTLYGFGG</sequence>
<reference key="1">
    <citation type="journal article" date="1997" name="Proc. Natl. Acad. Sci. U.S.A.">
        <title>An unusual histone H3 specific for early macronuclear development in Euplotes crassus.</title>
        <authorList>
            <person name="Jahn C.L."/>
            <person name="Ling Z."/>
            <person name="Tebeau C.M."/>
            <person name="Klobutcher L.A."/>
        </authorList>
    </citation>
    <scope>NUCLEOTIDE SEQUENCE [GENOMIC DNA]</scope>
</reference>
<reference key="2">
    <citation type="journal article" date="1997" name="FEMS Microbiol. Lett.">
        <title>H4 histone in the macronucleus of Blepharisma japonicum (Protozoa, Ciliophora, Heterotrichida).</title>
        <authorList>
            <person name="Salvini M."/>
            <person name="Bini E."/>
            <person name="Santucci A."/>
            <person name="Batistoni R."/>
        </authorList>
    </citation>
    <scope>PROTEIN SEQUENCE OF 2-16</scope>
</reference>
<reference key="3">
    <citation type="journal article" date="1989" name="Proc. Natl. Acad. Sci. U.S.A.">
        <title>Differential use of termination codons in ciliated protozoa.</title>
        <authorList>
            <person name="Harper D.S."/>
            <person name="Jahn C.L."/>
        </authorList>
    </citation>
    <scope>NUCLEOTIDE SEQUENCE [GENOMIC DNA] OF 90-107</scope>
</reference>
<comment type="function">
    <text>Core component of nucleosome. Nucleosomes wrap and compact DNA into chromatin, limiting DNA accessibility to the cellular machineries which require DNA as a template. Histones thereby play a central role in transcription regulation, DNA repair, DNA replication and chromosomal stability. DNA accessibility is regulated via a complex set of post-translational modifications of histones, also called histone code, and nucleosome remodeling.</text>
</comment>
<comment type="subunit">
    <text>The nucleosome is a histone octamer containing two molecules each of H2A, H2B, H3 and H4 assembled in one H3-H4 heterotetramer and two H2A-H2B heterodimers. The octamer wraps approximately 147 bp of DNA.</text>
</comment>
<comment type="subcellular location">
    <subcellularLocation>
        <location evidence="1">Nucleus</location>
    </subcellularLocation>
    <subcellularLocation>
        <location evidence="1">Chromosome</location>
    </subcellularLocation>
</comment>
<comment type="similarity">
    <text evidence="4">Belongs to the histone H4 family.</text>
</comment>
<accession>P80739</accession>
<accession>P90544</accession>
<organism>
    <name type="scientific">Euplotes crassus</name>
    <dbReference type="NCBI Taxonomy" id="5936"/>
    <lineage>
        <taxon>Eukaryota</taxon>
        <taxon>Sar</taxon>
        <taxon>Alveolata</taxon>
        <taxon>Ciliophora</taxon>
        <taxon>Intramacronucleata</taxon>
        <taxon>Spirotrichea</taxon>
        <taxon>Hypotrichia</taxon>
        <taxon>Euplotida</taxon>
        <taxon>Euplotidae</taxon>
        <taxon>Moneuplotes</taxon>
    </lineage>
</organism>
<dbReference type="EMBL" id="U75430">
    <property type="protein sequence ID" value="AAB39722.1"/>
    <property type="molecule type" value="Genomic_DNA"/>
</dbReference>
<dbReference type="PIR" id="C30309">
    <property type="entry name" value="C30309"/>
</dbReference>
<dbReference type="SMR" id="P80739"/>
<dbReference type="OrthoDB" id="306905at2759"/>
<dbReference type="GO" id="GO:0000786">
    <property type="term" value="C:nucleosome"/>
    <property type="evidence" value="ECO:0007669"/>
    <property type="project" value="UniProtKB-KW"/>
</dbReference>
<dbReference type="GO" id="GO:0005634">
    <property type="term" value="C:nucleus"/>
    <property type="evidence" value="ECO:0007669"/>
    <property type="project" value="UniProtKB-SubCell"/>
</dbReference>
<dbReference type="GO" id="GO:0003677">
    <property type="term" value="F:DNA binding"/>
    <property type="evidence" value="ECO:0007669"/>
    <property type="project" value="UniProtKB-KW"/>
</dbReference>
<dbReference type="GO" id="GO:0046982">
    <property type="term" value="F:protein heterodimerization activity"/>
    <property type="evidence" value="ECO:0007669"/>
    <property type="project" value="InterPro"/>
</dbReference>
<dbReference type="GO" id="GO:0030527">
    <property type="term" value="F:structural constituent of chromatin"/>
    <property type="evidence" value="ECO:0007669"/>
    <property type="project" value="InterPro"/>
</dbReference>
<dbReference type="CDD" id="cd22912">
    <property type="entry name" value="HFD_H4"/>
    <property type="match status" value="1"/>
</dbReference>
<dbReference type="FunFam" id="1.10.20.10:FF:000012">
    <property type="entry name" value="Histone H4"/>
    <property type="match status" value="1"/>
</dbReference>
<dbReference type="Gene3D" id="1.10.20.10">
    <property type="entry name" value="Histone, subunit A"/>
    <property type="match status" value="1"/>
</dbReference>
<dbReference type="InterPro" id="IPR035425">
    <property type="entry name" value="CENP-T/H4_C"/>
</dbReference>
<dbReference type="InterPro" id="IPR009072">
    <property type="entry name" value="Histone-fold"/>
</dbReference>
<dbReference type="InterPro" id="IPR001951">
    <property type="entry name" value="Histone_H4"/>
</dbReference>
<dbReference type="InterPro" id="IPR019809">
    <property type="entry name" value="Histone_H4_CS"/>
</dbReference>
<dbReference type="PANTHER" id="PTHR10484">
    <property type="entry name" value="HISTONE H4"/>
    <property type="match status" value="1"/>
</dbReference>
<dbReference type="Pfam" id="PF15511">
    <property type="entry name" value="CENP-T_C"/>
    <property type="match status" value="1"/>
</dbReference>
<dbReference type="PRINTS" id="PR00623">
    <property type="entry name" value="HISTONEH4"/>
</dbReference>
<dbReference type="SMART" id="SM00417">
    <property type="entry name" value="H4"/>
    <property type="match status" value="1"/>
</dbReference>
<dbReference type="SUPFAM" id="SSF47113">
    <property type="entry name" value="Histone-fold"/>
    <property type="match status" value="1"/>
</dbReference>
<dbReference type="PROSITE" id="PS00047">
    <property type="entry name" value="HISTONE_H4"/>
    <property type="match status" value="1"/>
</dbReference>